<evidence type="ECO:0000256" key="1">
    <source>
        <dbReference type="SAM" id="MobiDB-lite"/>
    </source>
</evidence>
<evidence type="ECO:0000305" key="2"/>
<evidence type="ECO:0000312" key="3">
    <source>
        <dbReference type="HGNC" id="HGNC:32271"/>
    </source>
</evidence>
<sequence>MMARRDPKSWAKRLVRAQTLQKQRRAPVGPRSPPPDEEDPRLKCKNCGAFGHTARSTRCPMKCWKAALVPATLGKKEGKENLKPWKPRAEANPGPLNKDKGEKEERPRQQDPQRKALLHMFSGKPPEKPLPNGKGSTESSDYLRVASGPMPVHTTSKRPRLDPVLADRSATEMSGRGSVLASLSPLRKASLSSSSSLGPKERQTGAAADMPQPAVRHQGREPLLVVKPTHSRPEGGCREVPQAASKTHGLLQAARPQAQDKRPAVTPQPCPPAATHSLGLGSNLSFGPGAKRPAQAPIQACLNFPKKPRLGPFQIPESAIQGGELGAPENLQPPPAATELGPSTSPQMGRRTPAQVPSVDRQPPHSRPCLPTAQACTMSHHPAASHDGAQPLRVLFRRLENGRWSSSLLAAPSFHSPEKPGAFLAQSPHVSEKSEAPCVRVPPSVLYEDLQVSSSSEDSDSDLE</sequence>
<organism>
    <name type="scientific">Homo sapiens</name>
    <name type="common">Human</name>
    <dbReference type="NCBI Taxonomy" id="9606"/>
    <lineage>
        <taxon>Eukaryota</taxon>
        <taxon>Metazoa</taxon>
        <taxon>Chordata</taxon>
        <taxon>Craniata</taxon>
        <taxon>Vertebrata</taxon>
        <taxon>Euteleostomi</taxon>
        <taxon>Mammalia</taxon>
        <taxon>Eutheria</taxon>
        <taxon>Euarchontoglires</taxon>
        <taxon>Primates</taxon>
        <taxon>Haplorrhini</taxon>
        <taxon>Catarrhini</taxon>
        <taxon>Hominidae</taxon>
        <taxon>Homo</taxon>
    </lineage>
</organism>
<accession>A8MXZ1</accession>
<proteinExistence type="inferred from homology"/>
<protein>
    <recommendedName>
        <fullName>Protein FAM90A23</fullName>
    </recommendedName>
</protein>
<name>F90AN_HUMAN</name>
<feature type="chain" id="PRO_0000338607" description="Protein FAM90A23">
    <location>
        <begin position="1"/>
        <end position="464"/>
    </location>
</feature>
<feature type="region of interest" description="Disordered" evidence="1">
    <location>
        <begin position="1"/>
        <end position="42"/>
    </location>
</feature>
<feature type="region of interest" description="Disordered" evidence="1">
    <location>
        <begin position="69"/>
        <end position="389"/>
    </location>
</feature>
<feature type="region of interest" description="Disordered" evidence="1">
    <location>
        <begin position="415"/>
        <end position="437"/>
    </location>
</feature>
<feature type="compositionally biased region" description="Basic and acidic residues" evidence="1">
    <location>
        <begin position="74"/>
        <end position="89"/>
    </location>
</feature>
<feature type="compositionally biased region" description="Basic and acidic residues" evidence="1">
    <location>
        <begin position="97"/>
        <end position="114"/>
    </location>
</feature>
<feature type="compositionally biased region" description="Low complexity" evidence="1">
    <location>
        <begin position="180"/>
        <end position="197"/>
    </location>
</feature>
<gene>
    <name evidence="3" type="primary">FAM90A23</name>
    <name type="synonym">FAM90A23P</name>
</gene>
<reference key="1">
    <citation type="journal article" date="2006" name="Nature">
        <title>DNA sequence and analysis of human chromosome 8.</title>
        <authorList>
            <person name="Nusbaum C."/>
            <person name="Mikkelsen T.S."/>
            <person name="Zody M.C."/>
            <person name="Asakawa S."/>
            <person name="Taudien S."/>
            <person name="Garber M."/>
            <person name="Kodira C.D."/>
            <person name="Schueler M.G."/>
            <person name="Shimizu A."/>
            <person name="Whittaker C.A."/>
            <person name="Chang J.L."/>
            <person name="Cuomo C.A."/>
            <person name="Dewar K."/>
            <person name="FitzGerald M.G."/>
            <person name="Yang X."/>
            <person name="Allen N.R."/>
            <person name="Anderson S."/>
            <person name="Asakawa T."/>
            <person name="Blechschmidt K."/>
            <person name="Bloom T."/>
            <person name="Borowsky M.L."/>
            <person name="Butler J."/>
            <person name="Cook A."/>
            <person name="Corum B."/>
            <person name="DeArellano K."/>
            <person name="DeCaprio D."/>
            <person name="Dooley K.T."/>
            <person name="Dorris L. III"/>
            <person name="Engels R."/>
            <person name="Gloeckner G."/>
            <person name="Hafez N."/>
            <person name="Hagopian D.S."/>
            <person name="Hall J.L."/>
            <person name="Ishikawa S.K."/>
            <person name="Jaffe D.B."/>
            <person name="Kamat A."/>
            <person name="Kudoh J."/>
            <person name="Lehmann R."/>
            <person name="Lokitsang T."/>
            <person name="Macdonald P."/>
            <person name="Major J.E."/>
            <person name="Matthews C.D."/>
            <person name="Mauceli E."/>
            <person name="Menzel U."/>
            <person name="Mihalev A.H."/>
            <person name="Minoshima S."/>
            <person name="Murayama Y."/>
            <person name="Naylor J.W."/>
            <person name="Nicol R."/>
            <person name="Nguyen C."/>
            <person name="O'Leary S.B."/>
            <person name="O'Neill K."/>
            <person name="Parker S.C.J."/>
            <person name="Polley A."/>
            <person name="Raymond C.K."/>
            <person name="Reichwald K."/>
            <person name="Rodriguez J."/>
            <person name="Sasaki T."/>
            <person name="Schilhabel M."/>
            <person name="Siddiqui R."/>
            <person name="Smith C.L."/>
            <person name="Sneddon T.P."/>
            <person name="Talamas J.A."/>
            <person name="Tenzin P."/>
            <person name="Topham K."/>
            <person name="Venkataraman V."/>
            <person name="Wen G."/>
            <person name="Yamazaki S."/>
            <person name="Young S.K."/>
            <person name="Zeng Q."/>
            <person name="Zimmer A.R."/>
            <person name="Rosenthal A."/>
            <person name="Birren B.W."/>
            <person name="Platzer M."/>
            <person name="Shimizu N."/>
            <person name="Lander E.S."/>
        </authorList>
    </citation>
    <scope>NUCLEOTIDE SEQUENCE [LARGE SCALE GENOMIC DNA]</scope>
</reference>
<keyword id="KW-1185">Reference proteome</keyword>
<comment type="similarity">
    <text evidence="2">Belongs to the FAM90 family.</text>
</comment>
<dbReference type="EMBL" id="AC134684">
    <property type="status" value="NOT_ANNOTATED_CDS"/>
    <property type="molecule type" value="Genomic_DNA"/>
</dbReference>
<dbReference type="CCDS" id="CCDS94252.1"/>
<dbReference type="RefSeq" id="NP_001384309.1">
    <property type="nucleotide sequence ID" value="NM_001397380.1"/>
</dbReference>
<dbReference type="GlyGen" id="A8MXZ1">
    <property type="glycosylation" value="1 site"/>
</dbReference>
<dbReference type="BioMuta" id="HGNC:32271"/>
<dbReference type="MassIVE" id="A8MXZ1"/>
<dbReference type="Ensembl" id="ENST00000648435.1">
    <property type="protein sequence ID" value="ENSP00000497005.1"/>
    <property type="gene ID" value="ENSG00000285765.1"/>
</dbReference>
<dbReference type="GeneID" id="645572"/>
<dbReference type="MANE-Select" id="ENST00000648435.1">
    <property type="protein sequence ID" value="ENSP00000497005.1"/>
    <property type="RefSeq nucleotide sequence ID" value="NM_001397380.1"/>
    <property type="RefSeq protein sequence ID" value="NP_001384309.1"/>
</dbReference>
<dbReference type="AGR" id="HGNC:32271"/>
<dbReference type="GeneCards" id="FAM90A23"/>
<dbReference type="HGNC" id="HGNC:32271">
    <property type="gene designation" value="FAM90A23"/>
</dbReference>
<dbReference type="HPA" id="ENSG00000285765">
    <property type="expression patterns" value="Not detected"/>
</dbReference>
<dbReference type="neXtProt" id="NX_A8MXZ1"/>
<dbReference type="VEuPathDB" id="HostDB:ENSG00000285765"/>
<dbReference type="GeneTree" id="ENSGT00910000144208"/>
<dbReference type="InParanoid" id="A8MXZ1"/>
<dbReference type="OMA" id="WREDWAS"/>
<dbReference type="PAN-GO" id="A8MXZ1">
    <property type="GO annotations" value="0 GO annotations based on evolutionary models"/>
</dbReference>
<dbReference type="PhylomeDB" id="A8MXZ1"/>
<dbReference type="Pharos" id="A8MXZ1">
    <property type="development level" value="Tdark"/>
</dbReference>
<dbReference type="Proteomes" id="UP000005640">
    <property type="component" value="Chromosome 8"/>
</dbReference>
<dbReference type="RNAct" id="A8MXZ1">
    <property type="molecule type" value="protein"/>
</dbReference>
<dbReference type="Bgee" id="ENSG00000285765">
    <property type="expression patterns" value="Expressed in primordial germ cell in gonad and 3 other cell types or tissues"/>
</dbReference>
<dbReference type="InterPro" id="IPR039213">
    <property type="entry name" value="FAM90"/>
</dbReference>
<dbReference type="InterPro" id="IPR041670">
    <property type="entry name" value="Znf-CCHC_6"/>
</dbReference>
<dbReference type="PANTHER" id="PTHR16035:SF14">
    <property type="entry name" value="FAMILY WITH SEQUENCE SIMILARITY 90 MEMBER A11, PSEUDOGENE-RELATED"/>
    <property type="match status" value="1"/>
</dbReference>
<dbReference type="PANTHER" id="PTHR16035">
    <property type="entry name" value="PROTEIN FAM90A1"/>
    <property type="match status" value="1"/>
</dbReference>
<dbReference type="Pfam" id="PF15288">
    <property type="entry name" value="zf-CCHC_6"/>
    <property type="match status" value="1"/>
</dbReference>